<feature type="chain" id="PRO_0000215936" description="Protein AF-10">
    <location>
        <begin position="1"/>
        <end position="1068"/>
    </location>
</feature>
<feature type="zinc finger region" description="PHD-type 1" evidence="3">
    <location>
        <begin position="22"/>
        <end position="74"/>
    </location>
</feature>
<feature type="zinc finger region" description="C2HC pre-PHD-type" evidence="4">
    <location>
        <begin position="79"/>
        <end position="112"/>
    </location>
</feature>
<feature type="zinc finger region" description="PHD-type 2" evidence="4">
    <location>
        <begin position="135"/>
        <end position="198"/>
    </location>
</feature>
<feature type="region of interest" description="Required for interaction with histone H3" evidence="2">
    <location>
        <begin position="106"/>
        <end position="190"/>
    </location>
</feature>
<feature type="region of interest" description="Disordered" evidence="5">
    <location>
        <begin position="207"/>
        <end position="260"/>
    </location>
</feature>
<feature type="region of interest" description="Disordered" evidence="5">
    <location>
        <begin position="296"/>
        <end position="416"/>
    </location>
</feature>
<feature type="region of interest" description="Disordered" evidence="5">
    <location>
        <begin position="428"/>
        <end position="506"/>
    </location>
</feature>
<feature type="region of interest" description="Disordered" evidence="5">
    <location>
        <begin position="583"/>
        <end position="613"/>
    </location>
</feature>
<feature type="region of interest" description="Disordered" evidence="5">
    <location>
        <begin position="660"/>
        <end position="698"/>
    </location>
</feature>
<feature type="region of interest" description="Leucine-zipper">
    <location>
        <begin position="752"/>
        <end position="780"/>
    </location>
</feature>
<feature type="region of interest" description="Disordered" evidence="5">
    <location>
        <begin position="786"/>
        <end position="869"/>
    </location>
</feature>
<feature type="region of interest" description="Disordered" evidence="5">
    <location>
        <begin position="1040"/>
        <end position="1068"/>
    </location>
</feature>
<feature type="compositionally biased region" description="Basic and acidic residues" evidence="5">
    <location>
        <begin position="223"/>
        <end position="240"/>
    </location>
</feature>
<feature type="compositionally biased region" description="Polar residues" evidence="5">
    <location>
        <begin position="296"/>
        <end position="305"/>
    </location>
</feature>
<feature type="compositionally biased region" description="Basic and acidic residues" evidence="5">
    <location>
        <begin position="306"/>
        <end position="317"/>
    </location>
</feature>
<feature type="compositionally biased region" description="Polar residues" evidence="5">
    <location>
        <begin position="340"/>
        <end position="351"/>
    </location>
</feature>
<feature type="compositionally biased region" description="Low complexity" evidence="5">
    <location>
        <begin position="352"/>
        <end position="372"/>
    </location>
</feature>
<feature type="compositionally biased region" description="Polar residues" evidence="5">
    <location>
        <begin position="387"/>
        <end position="396"/>
    </location>
</feature>
<feature type="compositionally biased region" description="Polar residues" evidence="5">
    <location>
        <begin position="404"/>
        <end position="416"/>
    </location>
</feature>
<feature type="compositionally biased region" description="Polar residues" evidence="5">
    <location>
        <begin position="428"/>
        <end position="446"/>
    </location>
</feature>
<feature type="compositionally biased region" description="Basic residues" evidence="5">
    <location>
        <begin position="465"/>
        <end position="483"/>
    </location>
</feature>
<feature type="compositionally biased region" description="Low complexity" evidence="5">
    <location>
        <begin position="490"/>
        <end position="506"/>
    </location>
</feature>
<feature type="compositionally biased region" description="Low complexity" evidence="5">
    <location>
        <begin position="583"/>
        <end position="594"/>
    </location>
</feature>
<feature type="compositionally biased region" description="Polar residues" evidence="5">
    <location>
        <begin position="595"/>
        <end position="604"/>
    </location>
</feature>
<feature type="compositionally biased region" description="Low complexity" evidence="5">
    <location>
        <begin position="681"/>
        <end position="692"/>
    </location>
</feature>
<feature type="compositionally biased region" description="Polar residues" evidence="5">
    <location>
        <begin position="787"/>
        <end position="816"/>
    </location>
</feature>
<feature type="compositionally biased region" description="Low complexity" evidence="5">
    <location>
        <begin position="836"/>
        <end position="850"/>
    </location>
</feature>
<feature type="compositionally biased region" description="Low complexity" evidence="5">
    <location>
        <begin position="857"/>
        <end position="869"/>
    </location>
</feature>
<feature type="compositionally biased region" description="Polar residues" evidence="5">
    <location>
        <begin position="1040"/>
        <end position="1054"/>
    </location>
</feature>
<feature type="modified residue" description="Phosphoserine" evidence="2">
    <location>
        <position position="217"/>
    </location>
</feature>
<feature type="modified residue" description="Phosphoserine" evidence="2">
    <location>
        <position position="252"/>
    </location>
</feature>
<feature type="modified residue" description="Phosphoserine" evidence="9">
    <location>
        <position position="436"/>
    </location>
</feature>
<feature type="modified residue" description="Phosphoserine" evidence="9">
    <location>
        <position position="532"/>
    </location>
</feature>
<feature type="modified residue" description="Phosphoserine" evidence="9">
    <location>
        <position position="686"/>
    </location>
</feature>
<feature type="modified residue" description="Phosphoserine" evidence="9">
    <location>
        <position position="688"/>
    </location>
</feature>
<feature type="modified residue" description="Phosphoserine" evidence="9">
    <location>
        <position position="691"/>
    </location>
</feature>
<feature type="cross-link" description="Glycyl lysine isopeptide (Lys-Gly) (interchain with G-Cter in SUMO2)" evidence="2">
    <location>
        <position position="280"/>
    </location>
</feature>
<feature type="sequence conflict" description="In Ref. 1; AAD11570." evidence="7" ref="1">
    <original>K</original>
    <variation>N</variation>
    <location>
        <position position="280"/>
    </location>
</feature>
<feature type="sequence conflict" description="In Ref. 1; AAD11570." evidence="7" ref="1">
    <original>S</original>
    <variation>P</variation>
    <location>
        <position position="363"/>
    </location>
</feature>
<feature type="sequence conflict" description="In Ref. 1; AAD11570." evidence="7" ref="1">
    <original>F</original>
    <variation>L</variation>
    <location>
        <position position="374"/>
    </location>
</feature>
<feature type="sequence conflict" description="In Ref. 1; AAD11570." evidence="7" ref="1">
    <original>P</original>
    <variation>T</variation>
    <location>
        <position position="437"/>
    </location>
</feature>
<feature type="sequence conflict" description="In Ref. 1; AAD11570." evidence="7" ref="1">
    <original>L</original>
    <variation>F</variation>
    <location>
        <position position="445"/>
    </location>
</feature>
<feature type="sequence conflict" description="In Ref. 1; AAD11570." evidence="7" ref="1">
    <original>E</original>
    <variation>G</variation>
    <location>
        <position position="709"/>
    </location>
</feature>
<feature type="sequence conflict" description="In Ref. 1; AAD11570." evidence="7" ref="1">
    <original>HQA</original>
    <variation>NKT</variation>
    <location>
        <begin position="991"/>
        <end position="993"/>
    </location>
</feature>
<proteinExistence type="evidence at protein level"/>
<organism>
    <name type="scientific">Mus musculus</name>
    <name type="common">Mouse</name>
    <dbReference type="NCBI Taxonomy" id="10090"/>
    <lineage>
        <taxon>Eukaryota</taxon>
        <taxon>Metazoa</taxon>
        <taxon>Chordata</taxon>
        <taxon>Craniata</taxon>
        <taxon>Vertebrata</taxon>
        <taxon>Euteleostomi</taxon>
        <taxon>Mammalia</taxon>
        <taxon>Eutheria</taxon>
        <taxon>Euarchontoglires</taxon>
        <taxon>Glires</taxon>
        <taxon>Rodentia</taxon>
        <taxon>Myomorpha</taxon>
        <taxon>Muroidea</taxon>
        <taxon>Muridae</taxon>
        <taxon>Murinae</taxon>
        <taxon>Mus</taxon>
        <taxon>Mus</taxon>
    </lineage>
</organism>
<dbReference type="EMBL" id="AF010135">
    <property type="protein sequence ID" value="AAD11570.1"/>
    <property type="molecule type" value="mRNA"/>
</dbReference>
<dbReference type="EMBL" id="AL928557">
    <property type="status" value="NOT_ANNOTATED_CDS"/>
    <property type="molecule type" value="Genomic_DNA"/>
</dbReference>
<dbReference type="EMBL" id="AL928589">
    <property type="status" value="NOT_ANNOTATED_CDS"/>
    <property type="molecule type" value="Genomic_DNA"/>
</dbReference>
<dbReference type="EMBL" id="CH466542">
    <property type="protein sequence ID" value="EDL08096.1"/>
    <property type="molecule type" value="Genomic_DNA"/>
</dbReference>
<dbReference type="EMBL" id="CH466542">
    <property type="protein sequence ID" value="EDL08097.1"/>
    <property type="molecule type" value="Genomic_DNA"/>
</dbReference>
<dbReference type="EMBL" id="BC070475">
    <property type="protein sequence ID" value="AAH70475.1"/>
    <property type="molecule type" value="mRNA"/>
</dbReference>
<dbReference type="CCDS" id="CCDS15708.1"/>
<dbReference type="RefSeq" id="NP_001239489.1">
    <property type="nucleotide sequence ID" value="NM_001252560.1"/>
</dbReference>
<dbReference type="RefSeq" id="NP_034934.2">
    <property type="nucleotide sequence ID" value="NM_010804.4"/>
</dbReference>
<dbReference type="RefSeq" id="XP_006497440.2">
    <property type="nucleotide sequence ID" value="XM_006497377.5"/>
</dbReference>
<dbReference type="SMR" id="O54826"/>
<dbReference type="BioGRID" id="201436">
    <property type="interactions" value="5"/>
</dbReference>
<dbReference type="DIP" id="DIP-58954N"/>
<dbReference type="FunCoup" id="O54826">
    <property type="interactions" value="3967"/>
</dbReference>
<dbReference type="IntAct" id="O54826">
    <property type="interactions" value="4"/>
</dbReference>
<dbReference type="STRING" id="10090.ENSMUSP00000028076"/>
<dbReference type="GlyGen" id="O54826">
    <property type="glycosylation" value="10 sites, 1 O-linked glycan (7 sites)"/>
</dbReference>
<dbReference type="iPTMnet" id="O54826"/>
<dbReference type="PhosphoSitePlus" id="O54826"/>
<dbReference type="SwissPalm" id="O54826"/>
<dbReference type="jPOST" id="O54826"/>
<dbReference type="PaxDb" id="10090-ENSMUSP00000110328"/>
<dbReference type="ProteomicsDB" id="281946"/>
<dbReference type="Pumba" id="O54826"/>
<dbReference type="Antibodypedia" id="1417">
    <property type="antibodies" value="383 antibodies from 32 providers"/>
</dbReference>
<dbReference type="DNASU" id="17354"/>
<dbReference type="Ensembl" id="ENSMUST00000028076.15">
    <property type="protein sequence ID" value="ENSMUSP00000028076.9"/>
    <property type="gene ID" value="ENSMUSG00000026743.17"/>
</dbReference>
<dbReference type="Ensembl" id="ENSMUST00000114680.9">
    <property type="protein sequence ID" value="ENSMUSP00000110328.3"/>
    <property type="gene ID" value="ENSMUSG00000026743.17"/>
</dbReference>
<dbReference type="GeneID" id="17354"/>
<dbReference type="KEGG" id="mmu:17354"/>
<dbReference type="UCSC" id="uc008ilm.2">
    <property type="organism name" value="mouse"/>
</dbReference>
<dbReference type="AGR" id="MGI:1329038"/>
<dbReference type="CTD" id="8028"/>
<dbReference type="MGI" id="MGI:1329038">
    <property type="gene designation" value="Mllt10"/>
</dbReference>
<dbReference type="VEuPathDB" id="HostDB:ENSMUSG00000026743"/>
<dbReference type="eggNOG" id="KOG0956">
    <property type="taxonomic scope" value="Eukaryota"/>
</dbReference>
<dbReference type="GeneTree" id="ENSGT00940000157711"/>
<dbReference type="HOGENOM" id="CLU_010286_0_1_1"/>
<dbReference type="InParanoid" id="O54826"/>
<dbReference type="OMA" id="XTCYICD"/>
<dbReference type="OrthoDB" id="20839at2759"/>
<dbReference type="PhylomeDB" id="O54826"/>
<dbReference type="TreeFam" id="TF316118"/>
<dbReference type="BioGRID-ORCS" id="17354">
    <property type="hits" value="5 hits in 83 CRISPR screens"/>
</dbReference>
<dbReference type="ChiTaRS" id="Mllt10">
    <property type="organism name" value="mouse"/>
</dbReference>
<dbReference type="PRO" id="PR:O54826"/>
<dbReference type="Proteomes" id="UP000000589">
    <property type="component" value="Chromosome 2"/>
</dbReference>
<dbReference type="RNAct" id="O54826">
    <property type="molecule type" value="protein"/>
</dbReference>
<dbReference type="Bgee" id="ENSMUSG00000026743">
    <property type="expression patterns" value="Expressed in spermatocyte and 264 other cell types or tissues"/>
</dbReference>
<dbReference type="ExpressionAtlas" id="O54826">
    <property type="expression patterns" value="baseline and differential"/>
</dbReference>
<dbReference type="GO" id="GO:0005654">
    <property type="term" value="C:nucleoplasm"/>
    <property type="evidence" value="ECO:0007669"/>
    <property type="project" value="Ensembl"/>
</dbReference>
<dbReference type="GO" id="GO:0005634">
    <property type="term" value="C:nucleus"/>
    <property type="evidence" value="ECO:0000266"/>
    <property type="project" value="MGI"/>
</dbReference>
<dbReference type="GO" id="GO:0032991">
    <property type="term" value="C:protein-containing complex"/>
    <property type="evidence" value="ECO:0000266"/>
    <property type="project" value="MGI"/>
</dbReference>
<dbReference type="GO" id="GO:0003682">
    <property type="term" value="F:chromatin binding"/>
    <property type="evidence" value="ECO:0000250"/>
    <property type="project" value="UniProtKB"/>
</dbReference>
<dbReference type="GO" id="GO:0042393">
    <property type="term" value="F:histone binding"/>
    <property type="evidence" value="ECO:0007669"/>
    <property type="project" value="Ensembl"/>
</dbReference>
<dbReference type="GO" id="GO:0031491">
    <property type="term" value="F:nucleosome binding"/>
    <property type="evidence" value="ECO:0000250"/>
    <property type="project" value="UniProtKB"/>
</dbReference>
<dbReference type="GO" id="GO:0008270">
    <property type="term" value="F:zinc ion binding"/>
    <property type="evidence" value="ECO:0007669"/>
    <property type="project" value="UniProtKB-KW"/>
</dbReference>
<dbReference type="GO" id="GO:0045944">
    <property type="term" value="P:positive regulation of transcription by RNA polymerase II"/>
    <property type="evidence" value="ECO:0007669"/>
    <property type="project" value="Ensembl"/>
</dbReference>
<dbReference type="CDD" id="cd20901">
    <property type="entry name" value="CC_AF10"/>
    <property type="match status" value="1"/>
</dbReference>
<dbReference type="CDD" id="cd15708">
    <property type="entry name" value="ePHD_AF10"/>
    <property type="match status" value="1"/>
</dbReference>
<dbReference type="CDD" id="cd15574">
    <property type="entry name" value="PHD_AF10_AF17"/>
    <property type="match status" value="1"/>
</dbReference>
<dbReference type="FunFam" id="3.30.40.10:FF:000042">
    <property type="entry name" value="protein AF-10 isoform X1"/>
    <property type="match status" value="1"/>
</dbReference>
<dbReference type="FunFam" id="3.30.40.10:FF:000053">
    <property type="entry name" value="protein AF-10 isoform X2"/>
    <property type="match status" value="1"/>
</dbReference>
<dbReference type="Gene3D" id="3.30.40.10">
    <property type="entry name" value="Zinc/RING finger domain, C3HC4 (zinc finger)"/>
    <property type="match status" value="2"/>
</dbReference>
<dbReference type="InterPro" id="IPR049773">
    <property type="entry name" value="AF10-like_CC"/>
</dbReference>
<dbReference type="InterPro" id="IPR049781">
    <property type="entry name" value="AF10/AF17_PHD"/>
</dbReference>
<dbReference type="InterPro" id="IPR049775">
    <property type="entry name" value="AF10_ePHD"/>
</dbReference>
<dbReference type="InterPro" id="IPR034732">
    <property type="entry name" value="EPHD"/>
</dbReference>
<dbReference type="InterPro" id="IPR050701">
    <property type="entry name" value="Histone_Mod_Regulator"/>
</dbReference>
<dbReference type="InterPro" id="IPR019786">
    <property type="entry name" value="Zinc_finger_PHD-type_CS"/>
</dbReference>
<dbReference type="InterPro" id="IPR011011">
    <property type="entry name" value="Znf_FYVE_PHD"/>
</dbReference>
<dbReference type="InterPro" id="IPR001965">
    <property type="entry name" value="Znf_PHD"/>
</dbReference>
<dbReference type="InterPro" id="IPR019787">
    <property type="entry name" value="Znf_PHD-finger"/>
</dbReference>
<dbReference type="InterPro" id="IPR013083">
    <property type="entry name" value="Znf_RING/FYVE/PHD"/>
</dbReference>
<dbReference type="PANTHER" id="PTHR13793">
    <property type="entry name" value="PHD FINGER PROTEINS"/>
    <property type="match status" value="1"/>
</dbReference>
<dbReference type="PANTHER" id="PTHR13793:SF93">
    <property type="entry name" value="PROTEIN AF-10"/>
    <property type="match status" value="1"/>
</dbReference>
<dbReference type="Pfam" id="PF13831">
    <property type="entry name" value="PHD_2"/>
    <property type="match status" value="1"/>
</dbReference>
<dbReference type="Pfam" id="PF13832">
    <property type="entry name" value="zf-HC5HC2H_2"/>
    <property type="match status" value="1"/>
</dbReference>
<dbReference type="SMART" id="SM00249">
    <property type="entry name" value="PHD"/>
    <property type="match status" value="2"/>
</dbReference>
<dbReference type="SUPFAM" id="SSF57903">
    <property type="entry name" value="FYVE/PHD zinc finger"/>
    <property type="match status" value="1"/>
</dbReference>
<dbReference type="PROSITE" id="PS51805">
    <property type="entry name" value="EPHD"/>
    <property type="match status" value="1"/>
</dbReference>
<dbReference type="PROSITE" id="PS01359">
    <property type="entry name" value="ZF_PHD_1"/>
    <property type="match status" value="1"/>
</dbReference>
<dbReference type="PROSITE" id="PS50016">
    <property type="entry name" value="ZF_PHD_2"/>
    <property type="match status" value="1"/>
</dbReference>
<protein>
    <recommendedName>
        <fullName evidence="7">Protein AF-10</fullName>
    </recommendedName>
</protein>
<name>AF10_MOUSE</name>
<keyword id="KW-0903">Direct protein sequencing</keyword>
<keyword id="KW-1017">Isopeptide bond</keyword>
<keyword id="KW-0479">Metal-binding</keyword>
<keyword id="KW-0539">Nucleus</keyword>
<keyword id="KW-0597">Phosphoprotein</keyword>
<keyword id="KW-1185">Reference proteome</keyword>
<keyword id="KW-0677">Repeat</keyword>
<keyword id="KW-0832">Ubl conjugation</keyword>
<keyword id="KW-0862">Zinc</keyword>
<keyword id="KW-0863">Zinc-finger</keyword>
<gene>
    <name evidence="8" type="primary">Mllt10</name>
    <name evidence="6" type="synonym">Af10</name>
</gene>
<comment type="function">
    <text evidence="1 2">Probably involved in transcriptional regulation. Binds to cruciform DNA (By similarity). In cells, binding to unmodified histone H3 regulates DOT1L functions including histone H3 'Lys-79' dimethylation (H3K79me2) and gene activation (By similarity).</text>
</comment>
<comment type="subunit">
    <text evidence="1 2">Self-associates. Interacts with FSTL3; the interaction enhances MLLT10 in vitro transcriptional activity and self-association. Interacts with YEATS4. Interacts with SS18. Interacts with DOT1L (By similarity). Interacts with histone H3; interaction is necessary for MLLT10 binding to nucleosomes; interaction is inhibited by histone H3 'Lys-27' methylations (H3K27me1, H3K27me2 and H3K27me3) amd acetylation; interaction stabilizes association of MLLT10 at chromatin; interaction is essential for histone H3 'Lys-79' dimethylation (H3K79me2) (By similarity).</text>
</comment>
<comment type="interaction">
    <interactant intactId="EBI-8459555">
        <id>O54826</id>
    </interactant>
    <interactant intactId="EBI-397872">
        <id>Q02248</id>
        <label>Ctnnb1</label>
    </interactant>
    <organismsDiffer>false</organismsDiffer>
    <experiments>2</experiments>
</comment>
<comment type="interaction">
    <interactant intactId="EBI-8459555">
        <id>O54826</id>
    </interactant>
    <interactant intactId="EBI-310070">
        <id>Q60722</id>
        <label>Tcf4</label>
    </interactant>
    <organismsDiffer>false</organismsDiffer>
    <experiments>3</experiments>
</comment>
<comment type="subcellular location">
    <subcellularLocation>
        <location evidence="1">Nucleus</location>
    </subcellularLocation>
</comment>
<evidence type="ECO:0000250" key="1"/>
<evidence type="ECO:0000250" key="2">
    <source>
        <dbReference type="UniProtKB" id="P55197"/>
    </source>
</evidence>
<evidence type="ECO:0000255" key="3">
    <source>
        <dbReference type="PROSITE-ProRule" id="PRU00146"/>
    </source>
</evidence>
<evidence type="ECO:0000255" key="4">
    <source>
        <dbReference type="PROSITE-ProRule" id="PRU01146"/>
    </source>
</evidence>
<evidence type="ECO:0000256" key="5">
    <source>
        <dbReference type="SAM" id="MobiDB-lite"/>
    </source>
</evidence>
<evidence type="ECO:0000303" key="6">
    <source>
    </source>
</evidence>
<evidence type="ECO:0000305" key="7"/>
<evidence type="ECO:0000312" key="8">
    <source>
        <dbReference type="MGI" id="MGI:1329038"/>
    </source>
</evidence>
<evidence type="ECO:0007744" key="9">
    <source>
    </source>
</evidence>
<accession>O54826</accession>
<accession>Q6NS43</accession>
<reference key="1">
    <citation type="journal article" date="1998" name="Biochim. Biophys. Acta">
        <title>Expression pattern and cellular distribution of the murine homologue of AF10.</title>
        <authorList>
            <person name="Linder B."/>
            <person name="Jones L.K."/>
            <person name="Chaplin T."/>
            <person name="Mohd-Sarip A."/>
            <person name="Heinlein U.A.O."/>
            <person name="Young B.D."/>
            <person name="Saha V."/>
        </authorList>
    </citation>
    <scope>NUCLEOTIDE SEQUENCE [MRNA]</scope>
</reference>
<reference key="2">
    <citation type="journal article" date="2009" name="PLoS Biol.">
        <title>Lineage-specific biology revealed by a finished genome assembly of the mouse.</title>
        <authorList>
            <person name="Church D.M."/>
            <person name="Goodstadt L."/>
            <person name="Hillier L.W."/>
            <person name="Zody M.C."/>
            <person name="Goldstein S."/>
            <person name="She X."/>
            <person name="Bult C.J."/>
            <person name="Agarwala R."/>
            <person name="Cherry J.L."/>
            <person name="DiCuccio M."/>
            <person name="Hlavina W."/>
            <person name="Kapustin Y."/>
            <person name="Meric P."/>
            <person name="Maglott D."/>
            <person name="Birtle Z."/>
            <person name="Marques A.C."/>
            <person name="Graves T."/>
            <person name="Zhou S."/>
            <person name="Teague B."/>
            <person name="Potamousis K."/>
            <person name="Churas C."/>
            <person name="Place M."/>
            <person name="Herschleb J."/>
            <person name="Runnheim R."/>
            <person name="Forrest D."/>
            <person name="Amos-Landgraf J."/>
            <person name="Schwartz D.C."/>
            <person name="Cheng Z."/>
            <person name="Lindblad-Toh K."/>
            <person name="Eichler E.E."/>
            <person name="Ponting C.P."/>
        </authorList>
    </citation>
    <scope>NUCLEOTIDE SEQUENCE [LARGE SCALE GENOMIC DNA]</scope>
    <source>
        <strain>C57BL/6J</strain>
    </source>
</reference>
<reference key="3">
    <citation type="submission" date="2005-07" db="EMBL/GenBank/DDBJ databases">
        <authorList>
            <person name="Mural R.J."/>
            <person name="Adams M.D."/>
            <person name="Myers E.W."/>
            <person name="Smith H.O."/>
            <person name="Venter J.C."/>
        </authorList>
    </citation>
    <scope>NUCLEOTIDE SEQUENCE [LARGE SCALE GENOMIC DNA]</scope>
</reference>
<reference key="4">
    <citation type="journal article" date="2004" name="Genome Res.">
        <title>The status, quality, and expansion of the NIH full-length cDNA project: the Mammalian Gene Collection (MGC).</title>
        <authorList>
            <consortium name="The MGC Project Team"/>
        </authorList>
    </citation>
    <scope>NUCLEOTIDE SEQUENCE [LARGE SCALE MRNA]</scope>
    <source>
        <strain>C57BL/6J</strain>
        <tissue>Head</tissue>
    </source>
</reference>
<reference key="5">
    <citation type="submission" date="2009-01" db="UniProtKB">
        <authorList>
            <person name="Lubec G."/>
            <person name="Sunyer B."/>
            <person name="Chen W.-Q."/>
        </authorList>
    </citation>
    <scope>PROTEIN SEQUENCE OF 211-226</scope>
    <scope>IDENTIFICATION BY MASS SPECTROMETRY</scope>
    <source>
        <strain>OF1</strain>
        <tissue>Hippocampus</tissue>
    </source>
</reference>
<reference key="6">
    <citation type="journal article" date="2010" name="Cell">
        <title>A tissue-specific atlas of mouse protein phosphorylation and expression.</title>
        <authorList>
            <person name="Huttlin E.L."/>
            <person name="Jedrychowski M.P."/>
            <person name="Elias J.E."/>
            <person name="Goswami T."/>
            <person name="Rad R."/>
            <person name="Beausoleil S.A."/>
            <person name="Villen J."/>
            <person name="Haas W."/>
            <person name="Sowa M.E."/>
            <person name="Gygi S.P."/>
        </authorList>
    </citation>
    <scope>PHOSPHORYLATION [LARGE SCALE ANALYSIS] AT SER-436; SER-532; SER-686; SER-688 AND SER-691</scope>
    <scope>IDENTIFICATION BY MASS SPECTROMETRY [LARGE SCALE ANALYSIS]</scope>
    <source>
        <tissue>Kidney</tissue>
        <tissue>Spleen</tissue>
        <tissue>Testis</tissue>
    </source>
</reference>
<sequence length="1068" mass="113029">MVSSDRPVSLEDEVSHSMKEMIGGCCVCSDERGWAENPLVYCDGHGCSVAVHQACYGIVQVPTGPWFCRKCESQERAARVRCELCPHKDGALKRTDNGGWAHVVCALYIPEVQFANVSTMEPIVLQSVPHDRYNKTCYICDEQGRESKAATGACMTCNKHGCRQAFHVTCAQFAGLLCEEEGNGADNVQYCGYCKYHFSKLKKSKRGSNRSYEQSLSDSSSHSQDKHHEKEKKKYKEKDKHKQKHKKQPEPSPALVPSLTVTTEKTYTSTSNNSISGSLKRLEDTAARFTNANFQEVSAHTSSGKDVSEARGSEGKGKKSSAHSSGQRGRKPGAGRNPGTAVSASSPFPQGSFSGTPGSVKSSSGSSVQSPQDFLSFTDSDLRSDSYTHTQQPSSTKDVHKGESGSQEAAVNSFSSLVGHPVTSTVISQPKSFDNSPGELGSSSLPTAGYKRAQTSGIEEEAVKEKKRKGNKQSKHGPGRPKGNKNQENVSHLSVSSASPTSSVASAAGSVTSSSLQKSPTLLRNGSLQSLSVGSSPVGSEISMQYRHDGACPTTTFSELLNAIHNGIYNSNDVAVSFPNVVSGSGSSTPVSSSHIPQQSSGHLQQVGALSPSAASSVTPAAATTQANTVSGSSLSQAPAHMYGSRLNQNPSMAVLIAQSESSQTDQDLGDNARSLGGRGSSPRGSLSPRSPVSNLQLRYDQPSNSSLETVPPVAASIEQLLERQWSEGQQFLLEQGTPGDILGMLKSLHQLQVENRRLEEQIKNLTAKKERLQLLNAQLSVPFPAITTNPSPSHQMHTYTAQTAPPPDSLNSSKSPHIGNSFLPDNSLPVLNQDLTSSGQSTSSSSALSTPPPAGQSPAQQSSGVSGVQQVNGVTVGALASGMQTVTSTIPAVSAVGGIIGALPGNQLAINGIVGALNGVIQTPVTISQNPAPLTHTSVPPNAAHPMPAAALTNSASGLGLLSDQQRQMFIQQQQFQQLLNSQQLTPEQHQAFLYQLMQQQHHPPELQQLQLPGPTQIPINNLLAGAQAPPLHTATTNPFLTIHGDSTSQKVTRLSDKTGPVAQEKS</sequence>